<gene>
    <name type="primary">Cyp308a1</name>
    <name type="ORF">CG6585</name>
</gene>
<keyword id="KW-0256">Endoplasmic reticulum</keyword>
<keyword id="KW-0349">Heme</keyword>
<keyword id="KW-0408">Iron</keyword>
<keyword id="KW-0472">Membrane</keyword>
<keyword id="KW-0479">Metal-binding</keyword>
<keyword id="KW-0492">Microsome</keyword>
<keyword id="KW-0503">Monooxygenase</keyword>
<keyword id="KW-0560">Oxidoreductase</keyword>
<keyword id="KW-1185">Reference proteome</keyword>
<organism>
    <name type="scientific">Drosophila melanogaster</name>
    <name type="common">Fruit fly</name>
    <dbReference type="NCBI Taxonomy" id="7227"/>
    <lineage>
        <taxon>Eukaryota</taxon>
        <taxon>Metazoa</taxon>
        <taxon>Ecdysozoa</taxon>
        <taxon>Arthropoda</taxon>
        <taxon>Hexapoda</taxon>
        <taxon>Insecta</taxon>
        <taxon>Pterygota</taxon>
        <taxon>Neoptera</taxon>
        <taxon>Endopterygota</taxon>
        <taxon>Diptera</taxon>
        <taxon>Brachycera</taxon>
        <taxon>Muscomorpha</taxon>
        <taxon>Ephydroidea</taxon>
        <taxon>Drosophilidae</taxon>
        <taxon>Drosophila</taxon>
        <taxon>Sophophora</taxon>
    </lineage>
</organism>
<feature type="chain" id="PRO_0000052317" description="Probable cytochrome P450 308a1">
    <location>
        <begin position="1"/>
        <end position="490"/>
    </location>
</feature>
<feature type="binding site" description="axial binding residue" evidence="1">
    <location>
        <position position="431"/>
    </location>
    <ligand>
        <name>heme</name>
        <dbReference type="ChEBI" id="CHEBI:30413"/>
    </ligand>
    <ligandPart>
        <name>Fe</name>
        <dbReference type="ChEBI" id="CHEBI:18248"/>
    </ligandPart>
</feature>
<reference key="1">
    <citation type="journal article" date="2000" name="Science">
        <title>The genome sequence of Drosophila melanogaster.</title>
        <authorList>
            <person name="Adams M.D."/>
            <person name="Celniker S.E."/>
            <person name="Holt R.A."/>
            <person name="Evans C.A."/>
            <person name="Gocayne J.D."/>
            <person name="Amanatides P.G."/>
            <person name="Scherer S.E."/>
            <person name="Li P.W."/>
            <person name="Hoskins R.A."/>
            <person name="Galle R.F."/>
            <person name="George R.A."/>
            <person name="Lewis S.E."/>
            <person name="Richards S."/>
            <person name="Ashburner M."/>
            <person name="Henderson S.N."/>
            <person name="Sutton G.G."/>
            <person name="Wortman J.R."/>
            <person name="Yandell M.D."/>
            <person name="Zhang Q."/>
            <person name="Chen L.X."/>
            <person name="Brandon R.C."/>
            <person name="Rogers Y.-H.C."/>
            <person name="Blazej R.G."/>
            <person name="Champe M."/>
            <person name="Pfeiffer B.D."/>
            <person name="Wan K.H."/>
            <person name="Doyle C."/>
            <person name="Baxter E.G."/>
            <person name="Helt G."/>
            <person name="Nelson C.R."/>
            <person name="Miklos G.L.G."/>
            <person name="Abril J.F."/>
            <person name="Agbayani A."/>
            <person name="An H.-J."/>
            <person name="Andrews-Pfannkoch C."/>
            <person name="Baldwin D."/>
            <person name="Ballew R.M."/>
            <person name="Basu A."/>
            <person name="Baxendale J."/>
            <person name="Bayraktaroglu L."/>
            <person name="Beasley E.M."/>
            <person name="Beeson K.Y."/>
            <person name="Benos P.V."/>
            <person name="Berman B.P."/>
            <person name="Bhandari D."/>
            <person name="Bolshakov S."/>
            <person name="Borkova D."/>
            <person name="Botchan M.R."/>
            <person name="Bouck J."/>
            <person name="Brokstein P."/>
            <person name="Brottier P."/>
            <person name="Burtis K.C."/>
            <person name="Busam D.A."/>
            <person name="Butler H."/>
            <person name="Cadieu E."/>
            <person name="Center A."/>
            <person name="Chandra I."/>
            <person name="Cherry J.M."/>
            <person name="Cawley S."/>
            <person name="Dahlke C."/>
            <person name="Davenport L.B."/>
            <person name="Davies P."/>
            <person name="de Pablos B."/>
            <person name="Delcher A."/>
            <person name="Deng Z."/>
            <person name="Mays A.D."/>
            <person name="Dew I."/>
            <person name="Dietz S.M."/>
            <person name="Dodson K."/>
            <person name="Doup L.E."/>
            <person name="Downes M."/>
            <person name="Dugan-Rocha S."/>
            <person name="Dunkov B.C."/>
            <person name="Dunn P."/>
            <person name="Durbin K.J."/>
            <person name="Evangelista C.C."/>
            <person name="Ferraz C."/>
            <person name="Ferriera S."/>
            <person name="Fleischmann W."/>
            <person name="Fosler C."/>
            <person name="Gabrielian A.E."/>
            <person name="Garg N.S."/>
            <person name="Gelbart W.M."/>
            <person name="Glasser K."/>
            <person name="Glodek A."/>
            <person name="Gong F."/>
            <person name="Gorrell J.H."/>
            <person name="Gu Z."/>
            <person name="Guan P."/>
            <person name="Harris M."/>
            <person name="Harris N.L."/>
            <person name="Harvey D.A."/>
            <person name="Heiman T.J."/>
            <person name="Hernandez J.R."/>
            <person name="Houck J."/>
            <person name="Hostin D."/>
            <person name="Houston K.A."/>
            <person name="Howland T.J."/>
            <person name="Wei M.-H."/>
            <person name="Ibegwam C."/>
            <person name="Jalali M."/>
            <person name="Kalush F."/>
            <person name="Karpen G.H."/>
            <person name="Ke Z."/>
            <person name="Kennison J.A."/>
            <person name="Ketchum K.A."/>
            <person name="Kimmel B.E."/>
            <person name="Kodira C.D."/>
            <person name="Kraft C.L."/>
            <person name="Kravitz S."/>
            <person name="Kulp D."/>
            <person name="Lai Z."/>
            <person name="Lasko P."/>
            <person name="Lei Y."/>
            <person name="Levitsky A.A."/>
            <person name="Li J.H."/>
            <person name="Li Z."/>
            <person name="Liang Y."/>
            <person name="Lin X."/>
            <person name="Liu X."/>
            <person name="Mattei B."/>
            <person name="McIntosh T.C."/>
            <person name="McLeod M.P."/>
            <person name="McPherson D."/>
            <person name="Merkulov G."/>
            <person name="Milshina N.V."/>
            <person name="Mobarry C."/>
            <person name="Morris J."/>
            <person name="Moshrefi A."/>
            <person name="Mount S.M."/>
            <person name="Moy M."/>
            <person name="Murphy B."/>
            <person name="Murphy L."/>
            <person name="Muzny D.M."/>
            <person name="Nelson D.L."/>
            <person name="Nelson D.R."/>
            <person name="Nelson K.A."/>
            <person name="Nixon K."/>
            <person name="Nusskern D.R."/>
            <person name="Pacleb J.M."/>
            <person name="Palazzolo M."/>
            <person name="Pittman G.S."/>
            <person name="Pan S."/>
            <person name="Pollard J."/>
            <person name="Puri V."/>
            <person name="Reese M.G."/>
            <person name="Reinert K."/>
            <person name="Remington K."/>
            <person name="Saunders R.D.C."/>
            <person name="Scheeler F."/>
            <person name="Shen H."/>
            <person name="Shue B.C."/>
            <person name="Siden-Kiamos I."/>
            <person name="Simpson M."/>
            <person name="Skupski M.P."/>
            <person name="Smith T.J."/>
            <person name="Spier E."/>
            <person name="Spradling A.C."/>
            <person name="Stapleton M."/>
            <person name="Strong R."/>
            <person name="Sun E."/>
            <person name="Svirskas R."/>
            <person name="Tector C."/>
            <person name="Turner R."/>
            <person name="Venter E."/>
            <person name="Wang A.H."/>
            <person name="Wang X."/>
            <person name="Wang Z.-Y."/>
            <person name="Wassarman D.A."/>
            <person name="Weinstock G.M."/>
            <person name="Weissenbach J."/>
            <person name="Williams S.M."/>
            <person name="Woodage T."/>
            <person name="Worley K.C."/>
            <person name="Wu D."/>
            <person name="Yang S."/>
            <person name="Yao Q.A."/>
            <person name="Ye J."/>
            <person name="Yeh R.-F."/>
            <person name="Zaveri J.S."/>
            <person name="Zhan M."/>
            <person name="Zhang G."/>
            <person name="Zhao Q."/>
            <person name="Zheng L."/>
            <person name="Zheng X.H."/>
            <person name="Zhong F.N."/>
            <person name="Zhong W."/>
            <person name="Zhou X."/>
            <person name="Zhu S.C."/>
            <person name="Zhu X."/>
            <person name="Smith H.O."/>
            <person name="Gibbs R.A."/>
            <person name="Myers E.W."/>
            <person name="Rubin G.M."/>
            <person name="Venter J.C."/>
        </authorList>
    </citation>
    <scope>NUCLEOTIDE SEQUENCE [LARGE SCALE GENOMIC DNA]</scope>
    <source>
        <strain>Berkeley</strain>
    </source>
</reference>
<reference key="2">
    <citation type="journal article" date="2002" name="Genome Biol.">
        <title>Annotation of the Drosophila melanogaster euchromatic genome: a systematic review.</title>
        <authorList>
            <person name="Misra S."/>
            <person name="Crosby M.A."/>
            <person name="Mungall C.J."/>
            <person name="Matthews B.B."/>
            <person name="Campbell K.S."/>
            <person name="Hradecky P."/>
            <person name="Huang Y."/>
            <person name="Kaminker J.S."/>
            <person name="Millburn G.H."/>
            <person name="Prochnik S.E."/>
            <person name="Smith C.D."/>
            <person name="Tupy J.L."/>
            <person name="Whitfield E.J."/>
            <person name="Bayraktaroglu L."/>
            <person name="Berman B.P."/>
            <person name="Bettencourt B.R."/>
            <person name="Celniker S.E."/>
            <person name="de Grey A.D.N.J."/>
            <person name="Drysdale R.A."/>
            <person name="Harris N.L."/>
            <person name="Richter J."/>
            <person name="Russo S."/>
            <person name="Schroeder A.J."/>
            <person name="Shu S.Q."/>
            <person name="Stapleton M."/>
            <person name="Yamada C."/>
            <person name="Ashburner M."/>
            <person name="Gelbart W.M."/>
            <person name="Rubin G.M."/>
            <person name="Lewis S.E."/>
        </authorList>
    </citation>
    <scope>GENOME REANNOTATION</scope>
    <source>
        <strain>Berkeley</strain>
    </source>
</reference>
<reference key="3">
    <citation type="submission" date="2006-04" db="EMBL/GenBank/DDBJ databases">
        <authorList>
            <person name="Stapleton M."/>
            <person name="Carlson J.W."/>
            <person name="Chavez C."/>
            <person name="Frise E."/>
            <person name="George R.A."/>
            <person name="Pacleb J.M."/>
            <person name="Park S."/>
            <person name="Wan K.H."/>
            <person name="Yu C."/>
            <person name="Celniker S.E."/>
        </authorList>
    </citation>
    <scope>NUCLEOTIDE SEQUENCE [LARGE SCALE MRNA]</scope>
    <source>
        <strain>Berkeley</strain>
    </source>
</reference>
<name>CP308_DROME</name>
<protein>
    <recommendedName>
        <fullName>Probable cytochrome P450 308a1</fullName>
        <ecNumber>1.14.-.-</ecNumber>
    </recommendedName>
    <alternativeName>
        <fullName>CYPCCCVIIIA1</fullName>
    </alternativeName>
</protein>
<proteinExistence type="evidence at transcript level"/>
<dbReference type="EC" id="1.14.-.-"/>
<dbReference type="EMBL" id="AE014298">
    <property type="protein sequence ID" value="AAF48876.2"/>
    <property type="molecule type" value="Genomic_DNA"/>
</dbReference>
<dbReference type="EMBL" id="BT025153">
    <property type="protein sequence ID" value="ABE73323.1"/>
    <property type="molecule type" value="mRNA"/>
</dbReference>
<dbReference type="RefSeq" id="NP_573320.1">
    <property type="nucleotide sequence ID" value="NM_133092.3"/>
</dbReference>
<dbReference type="SMR" id="Q9VWR2"/>
<dbReference type="STRING" id="7227.FBpp0074375"/>
<dbReference type="PaxDb" id="7227-FBpp0074375"/>
<dbReference type="DNASU" id="32859"/>
<dbReference type="EnsemblMetazoa" id="FBtr0074604">
    <property type="protein sequence ID" value="FBpp0074375"/>
    <property type="gene ID" value="FBgn0030949"/>
</dbReference>
<dbReference type="GeneID" id="32859"/>
<dbReference type="KEGG" id="dme:Dmel_CG6585"/>
<dbReference type="UCSC" id="CG6585-RA">
    <property type="organism name" value="d. melanogaster"/>
</dbReference>
<dbReference type="AGR" id="FB:FBgn0030949"/>
<dbReference type="CTD" id="32859"/>
<dbReference type="FlyBase" id="FBgn0030949">
    <property type="gene designation" value="Cyp308a1"/>
</dbReference>
<dbReference type="VEuPathDB" id="VectorBase:FBgn0030949"/>
<dbReference type="eggNOG" id="KOG0158">
    <property type="taxonomic scope" value="Eukaryota"/>
</dbReference>
<dbReference type="GeneTree" id="ENSGT00940000167276"/>
<dbReference type="HOGENOM" id="CLU_001570_5_2_1"/>
<dbReference type="InParanoid" id="Q9VWR2"/>
<dbReference type="OMA" id="QDHCVLL"/>
<dbReference type="OrthoDB" id="2789670at2759"/>
<dbReference type="PhylomeDB" id="Q9VWR2"/>
<dbReference type="BioGRID-ORCS" id="32859">
    <property type="hits" value="0 hits in 1 CRISPR screen"/>
</dbReference>
<dbReference type="GenomeRNAi" id="32859"/>
<dbReference type="PRO" id="PR:Q9VWR2"/>
<dbReference type="Proteomes" id="UP000000803">
    <property type="component" value="Chromosome X"/>
</dbReference>
<dbReference type="Bgee" id="FBgn0030949">
    <property type="expression patterns" value="Expressed in epithelial cell in antenna and 14 other cell types or tissues"/>
</dbReference>
<dbReference type="GO" id="GO:0005789">
    <property type="term" value="C:endoplasmic reticulum membrane"/>
    <property type="evidence" value="ECO:0007669"/>
    <property type="project" value="UniProtKB-SubCell"/>
</dbReference>
<dbReference type="GO" id="GO:0020037">
    <property type="term" value="F:heme binding"/>
    <property type="evidence" value="ECO:0007669"/>
    <property type="project" value="InterPro"/>
</dbReference>
<dbReference type="GO" id="GO:0005506">
    <property type="term" value="F:iron ion binding"/>
    <property type="evidence" value="ECO:0007669"/>
    <property type="project" value="InterPro"/>
</dbReference>
<dbReference type="GO" id="GO:0004497">
    <property type="term" value="F:monooxygenase activity"/>
    <property type="evidence" value="ECO:0007669"/>
    <property type="project" value="UniProtKB-KW"/>
</dbReference>
<dbReference type="GO" id="GO:0016705">
    <property type="term" value="F:oxidoreductase activity, acting on paired donors, with incorporation or reduction of molecular oxygen"/>
    <property type="evidence" value="ECO:0007669"/>
    <property type="project" value="InterPro"/>
</dbReference>
<dbReference type="CDD" id="cd11056">
    <property type="entry name" value="CYP6-like"/>
    <property type="match status" value="1"/>
</dbReference>
<dbReference type="Gene3D" id="1.10.630.10">
    <property type="entry name" value="Cytochrome P450"/>
    <property type="match status" value="1"/>
</dbReference>
<dbReference type="InterPro" id="IPR001128">
    <property type="entry name" value="Cyt_P450"/>
</dbReference>
<dbReference type="InterPro" id="IPR017972">
    <property type="entry name" value="Cyt_P450_CS"/>
</dbReference>
<dbReference type="InterPro" id="IPR002401">
    <property type="entry name" value="Cyt_P450_E_grp-I"/>
</dbReference>
<dbReference type="InterPro" id="IPR036396">
    <property type="entry name" value="Cyt_P450_sf"/>
</dbReference>
<dbReference type="InterPro" id="IPR050476">
    <property type="entry name" value="Insect_CytP450_Detox"/>
</dbReference>
<dbReference type="PANTHER" id="PTHR24292">
    <property type="entry name" value="CYTOCHROME P450"/>
    <property type="match status" value="1"/>
</dbReference>
<dbReference type="PANTHER" id="PTHR24292:SF104">
    <property type="entry name" value="CYTOCHROME P450 308A1-RELATED"/>
    <property type="match status" value="1"/>
</dbReference>
<dbReference type="Pfam" id="PF00067">
    <property type="entry name" value="p450"/>
    <property type="match status" value="1"/>
</dbReference>
<dbReference type="PRINTS" id="PR00463">
    <property type="entry name" value="EP450I"/>
</dbReference>
<dbReference type="PRINTS" id="PR00385">
    <property type="entry name" value="P450"/>
</dbReference>
<dbReference type="SUPFAM" id="SSF48264">
    <property type="entry name" value="Cytochrome P450"/>
    <property type="match status" value="1"/>
</dbReference>
<dbReference type="PROSITE" id="PS00086">
    <property type="entry name" value="CYTOCHROME_P450"/>
    <property type="match status" value="1"/>
</dbReference>
<sequence>MLPLVLFILLAATLLFWKWQGNHWRRLGLEAPFGWPLVGNMLDFALGRRSYGEIYQEIYTRNPGLKYVGFYRLFNEPAILVRDQELLRQILVGRNFADCADNAVYVDHQRDVLASHNPFIANGDRWRVLRADLVPLFTPSRVRQTLPHVARACQLLRDQVPLGRFEAKDLATRYTLQVVASAIFGLDAHCLGIHMRVAHEPSRWLEWLAPLFQPSVWSLLETMSLLHTPRLGRLIGHRYVPLPLQHWFRELVEARSGGDNLLQWLAESKRGLGKEELAGHATTLLLEGYETSAMLLAFALYELALNEDAQRRLHIELDEVAQRHAGNLIDPVALGELRYSEAALLEALRLHPAMQALQKRCTKTFTLPDQKSGASSELKVHLGTVLVLPVQAIHLDPALYPAPNQFRPERFLNQPPMGCRFLGFGAGPRMCPGMRLGLLQTKAALTTLLQDHCVQLADEDQCRVEVSPLTFLTASRNGIWLSFKRRTRRY</sequence>
<comment type="function">
    <text evidence="1">May be involved in the metabolism of insect hormones and in the breakdown of synthetic insecticides.</text>
</comment>
<comment type="cofactor">
    <cofactor evidence="1">
        <name>heme</name>
        <dbReference type="ChEBI" id="CHEBI:30413"/>
    </cofactor>
</comment>
<comment type="subcellular location">
    <subcellularLocation>
        <location evidence="2">Endoplasmic reticulum membrane</location>
        <topology evidence="2">Peripheral membrane protein</topology>
    </subcellularLocation>
    <subcellularLocation>
        <location evidence="2">Microsome membrane</location>
        <topology evidence="2">Peripheral membrane protein</topology>
    </subcellularLocation>
</comment>
<comment type="similarity">
    <text evidence="2">Belongs to the cytochrome P450 family.</text>
</comment>
<accession>Q9VWR2</accession>
<accession>Q1RKQ7</accession>
<evidence type="ECO:0000250" key="1"/>
<evidence type="ECO:0000305" key="2"/>